<protein>
    <recommendedName>
        <fullName>Nuclear distribution protein nudE homolog 1</fullName>
    </recommendedName>
</protein>
<reference key="1">
    <citation type="submission" date="2004-08" db="EMBL/GenBank/DDBJ databases">
        <authorList>
            <consortium name="NIH - Xenopus Gene Collection (XGC) project"/>
        </authorList>
    </citation>
    <scope>NUCLEOTIDE SEQUENCE [LARGE SCALE MRNA]</scope>
    <source>
        <tissue>Embryo</tissue>
    </source>
</reference>
<dbReference type="EMBL" id="BC080874">
    <property type="protein sequence ID" value="AAH80874.1"/>
    <property type="molecule type" value="mRNA"/>
</dbReference>
<dbReference type="RefSeq" id="NP_001007996.1">
    <property type="nucleotide sequence ID" value="NM_001007995.1"/>
</dbReference>
<dbReference type="RefSeq" id="XP_017953066.1">
    <property type="nucleotide sequence ID" value="XM_018097577.1"/>
</dbReference>
<dbReference type="SMR" id="Q66JL0"/>
<dbReference type="FunCoup" id="Q66JL0">
    <property type="interactions" value="1076"/>
</dbReference>
<dbReference type="STRING" id="8364.ENSXETP00000052855"/>
<dbReference type="PaxDb" id="8364-ENSXETP00000012155"/>
<dbReference type="DNASU" id="493358"/>
<dbReference type="GeneID" id="493358"/>
<dbReference type="KEGG" id="xtr:493358"/>
<dbReference type="AGR" id="Xenbase:XB-GENE-1005616"/>
<dbReference type="CTD" id="54820"/>
<dbReference type="Xenbase" id="XB-GENE-1005616">
    <property type="gene designation" value="nde1"/>
</dbReference>
<dbReference type="eggNOG" id="KOG1853">
    <property type="taxonomic scope" value="Eukaryota"/>
</dbReference>
<dbReference type="HOGENOM" id="CLU_057872_0_0_1"/>
<dbReference type="InParanoid" id="Q66JL0"/>
<dbReference type="OMA" id="EQTVNRR"/>
<dbReference type="OrthoDB" id="5877028at2759"/>
<dbReference type="PhylomeDB" id="Q66JL0"/>
<dbReference type="TreeFam" id="TF325693"/>
<dbReference type="Reactome" id="R-XTR-141444">
    <property type="pathway name" value="Amplification of signal from unattached kinetochores via a MAD2 inhibitory signal"/>
</dbReference>
<dbReference type="Reactome" id="R-XTR-2467813">
    <property type="pathway name" value="Separation of Sister Chromatids"/>
</dbReference>
<dbReference type="Reactome" id="R-XTR-2500257">
    <property type="pathway name" value="Resolution of Sister Chromatid Cohesion"/>
</dbReference>
<dbReference type="Reactome" id="R-XTR-2565942">
    <property type="pathway name" value="Regulation of PLK1 Activity at G2/M Transition"/>
</dbReference>
<dbReference type="Reactome" id="R-XTR-380259">
    <property type="pathway name" value="Loss of Nlp from mitotic centrosomes"/>
</dbReference>
<dbReference type="Reactome" id="R-XTR-380270">
    <property type="pathway name" value="Recruitment of mitotic centrosome proteins and complexes"/>
</dbReference>
<dbReference type="Reactome" id="R-XTR-380320">
    <property type="pathway name" value="Recruitment of NuMA to mitotic centrosomes"/>
</dbReference>
<dbReference type="Reactome" id="R-XTR-5620912">
    <property type="pathway name" value="Anchoring of the basal body to the plasma membrane"/>
</dbReference>
<dbReference type="Reactome" id="R-XTR-5663220">
    <property type="pathway name" value="RHO GTPases Activate Formins"/>
</dbReference>
<dbReference type="Reactome" id="R-XTR-68877">
    <property type="pathway name" value="Mitotic Prometaphase"/>
</dbReference>
<dbReference type="Reactome" id="R-XTR-8854518">
    <property type="pathway name" value="AURKA Activation by TPX2"/>
</dbReference>
<dbReference type="Reactome" id="R-XTR-9648025">
    <property type="pathway name" value="EML4 and NUDC in mitotic spindle formation"/>
</dbReference>
<dbReference type="Proteomes" id="UP000008143">
    <property type="component" value="Chromosome 9"/>
</dbReference>
<dbReference type="Bgee" id="ENSXETG00000005528">
    <property type="expression patterns" value="Expressed in 4-cell stage embryo and 12 other cell types or tissues"/>
</dbReference>
<dbReference type="GO" id="GO:0032154">
    <property type="term" value="C:cleavage furrow"/>
    <property type="evidence" value="ECO:0007669"/>
    <property type="project" value="UniProtKB-SubCell"/>
</dbReference>
<dbReference type="GO" id="GO:0030659">
    <property type="term" value="C:cytoplasmic vesicle membrane"/>
    <property type="evidence" value="ECO:0007669"/>
    <property type="project" value="UniProtKB-SubCell"/>
</dbReference>
<dbReference type="GO" id="GO:0005874">
    <property type="term" value="C:microtubule"/>
    <property type="evidence" value="ECO:0007669"/>
    <property type="project" value="UniProtKB-KW"/>
</dbReference>
<dbReference type="GO" id="GO:0031616">
    <property type="term" value="C:spindle pole centrosome"/>
    <property type="evidence" value="ECO:0000250"/>
    <property type="project" value="UniProtKB"/>
</dbReference>
<dbReference type="GO" id="GO:0008017">
    <property type="term" value="F:microtubule binding"/>
    <property type="evidence" value="ECO:0000250"/>
    <property type="project" value="UniProtKB"/>
</dbReference>
<dbReference type="GO" id="GO:0051301">
    <property type="term" value="P:cell division"/>
    <property type="evidence" value="ECO:0007669"/>
    <property type="project" value="UniProtKB-KW"/>
</dbReference>
<dbReference type="GO" id="GO:0051298">
    <property type="term" value="P:centrosome duplication"/>
    <property type="evidence" value="ECO:0000250"/>
    <property type="project" value="UniProtKB"/>
</dbReference>
<dbReference type="Gene3D" id="6.10.250.1080">
    <property type="match status" value="1"/>
</dbReference>
<dbReference type="InterPro" id="IPR033494">
    <property type="entry name" value="NUDE"/>
</dbReference>
<dbReference type="InterPro" id="IPR006964">
    <property type="entry name" value="NUDE_dom"/>
</dbReference>
<dbReference type="PANTHER" id="PTHR10921">
    <property type="entry name" value="NUCLEAR DISTRIBUTION PROTEIN NUDE HOMOLOG 1"/>
    <property type="match status" value="1"/>
</dbReference>
<dbReference type="PANTHER" id="PTHR10921:SF2">
    <property type="entry name" value="NUCLEAR DISTRIBUTION PROTEIN NUDE HOMOLOG 1"/>
    <property type="match status" value="1"/>
</dbReference>
<dbReference type="Pfam" id="PF04880">
    <property type="entry name" value="NUDE_C"/>
    <property type="match status" value="1"/>
</dbReference>
<organism>
    <name type="scientific">Xenopus tropicalis</name>
    <name type="common">Western clawed frog</name>
    <name type="synonym">Silurana tropicalis</name>
    <dbReference type="NCBI Taxonomy" id="8364"/>
    <lineage>
        <taxon>Eukaryota</taxon>
        <taxon>Metazoa</taxon>
        <taxon>Chordata</taxon>
        <taxon>Craniata</taxon>
        <taxon>Vertebrata</taxon>
        <taxon>Euteleostomi</taxon>
        <taxon>Amphibia</taxon>
        <taxon>Batrachia</taxon>
        <taxon>Anura</taxon>
        <taxon>Pipoidea</taxon>
        <taxon>Pipidae</taxon>
        <taxon>Xenopodinae</taxon>
        <taxon>Xenopus</taxon>
        <taxon>Silurana</taxon>
    </lineage>
</organism>
<proteinExistence type="evidence at transcript level"/>
<name>NDE1_XENTR</name>
<sequence length="349" mass="39553">MDDLENNIFNSVEEEIIYWKSVAMKYKTCSEEAQQELQEFQEASREYEAELEAQLQQIEGRNRDLFSENNRLRMELDGIKEKYEEQHSENYVQICSLEGDLSQTKAVRDQLQKYIRELEQANDDLERAKRATIMSLEDFEQRLNQAIERNAFLESELDEKENLLESVQRLKDEARDLRQELAVQQKQEKPKSNMGSPETERMDTSVKASVAIPSAPLTPLSQRGCASTLTSPLSFRTSLDDGYSGTPLTPCARISALNIVGDLLRKVGALESKLASCRNFVHEQSPNRPLTSVSARMNKTREGIENRLSMASGSSVEKGLIKRLEFGSLPSNTPVQGMHSPQGVVKMII</sequence>
<keyword id="KW-0131">Cell cycle</keyword>
<keyword id="KW-0132">Cell division</keyword>
<keyword id="KW-0137">Centromere</keyword>
<keyword id="KW-0158">Chromosome</keyword>
<keyword id="KW-0175">Coiled coil</keyword>
<keyword id="KW-0963">Cytoplasm</keyword>
<keyword id="KW-0968">Cytoplasmic vesicle</keyword>
<keyword id="KW-0206">Cytoskeleton</keyword>
<keyword id="KW-0995">Kinetochore</keyword>
<keyword id="KW-0472">Membrane</keyword>
<keyword id="KW-0493">Microtubule</keyword>
<keyword id="KW-0498">Mitosis</keyword>
<keyword id="KW-0597">Phosphoprotein</keyword>
<keyword id="KW-1185">Reference proteome</keyword>
<comment type="function">
    <text evidence="2">Required for centrosome duplication and formation and function of the mitotic spindle.</text>
</comment>
<comment type="subunit">
    <text evidence="1">Self-associates. Interacts with pafah1b1 (By similarity).</text>
</comment>
<comment type="subcellular location">
    <subcellularLocation>
        <location evidence="1">Cytoplasm</location>
        <location evidence="1">Cytoskeleton</location>
    </subcellularLocation>
    <subcellularLocation>
        <location evidence="1">Cytoplasm</location>
        <location evidence="1">Cytoskeleton</location>
        <location evidence="1">Microtubule organizing center</location>
        <location evidence="1">Centrosome</location>
    </subcellularLocation>
    <subcellularLocation>
        <location evidence="1">Cytoplasm</location>
        <location evidence="1">Cytoskeleton</location>
        <location evidence="1">Spindle</location>
    </subcellularLocation>
    <subcellularLocation>
        <location evidence="1">Chromosome</location>
        <location evidence="1">Centromere</location>
        <location evidence="1">Kinetochore</location>
    </subcellularLocation>
    <subcellularLocation>
        <location evidence="1">Cleavage furrow</location>
    </subcellularLocation>
    <subcellularLocation>
        <location evidence="2">Cytoplasmic vesicle membrane</location>
    </subcellularLocation>
    <text evidence="1">Localizes to the interphase centrosome and to the mitotic spindle.</text>
</comment>
<comment type="PTM">
    <text evidence="1">Phosphorylated in mitosis.</text>
</comment>
<comment type="similarity">
    <text evidence="5">Belongs to the nudE family.</text>
</comment>
<gene>
    <name type="primary">nde1</name>
</gene>
<accession>Q66JL0</accession>
<feature type="chain" id="PRO_0000240208" description="Nuclear distribution protein nudE homolog 1">
    <location>
        <begin position="1"/>
        <end position="349"/>
    </location>
</feature>
<feature type="region of interest" description="Disordered" evidence="4">
    <location>
        <begin position="182"/>
        <end position="201"/>
    </location>
</feature>
<feature type="coiled-coil region" evidence="3">
    <location>
        <begin position="23"/>
        <end position="189"/>
    </location>
</feature>
<evidence type="ECO:0000250" key="1"/>
<evidence type="ECO:0000250" key="2">
    <source>
        <dbReference type="UniProtKB" id="Q9NXR1"/>
    </source>
</evidence>
<evidence type="ECO:0000255" key="3"/>
<evidence type="ECO:0000256" key="4">
    <source>
        <dbReference type="SAM" id="MobiDB-lite"/>
    </source>
</evidence>
<evidence type="ECO:0000305" key="5"/>